<name>DNAG_CAMJE</name>
<accession>Q9PM37</accession>
<accession>Q0P7Z0</accession>
<protein>
    <recommendedName>
        <fullName evidence="1">DNA primase</fullName>
        <ecNumber evidence="1">2.7.7.101</ecNumber>
    </recommendedName>
</protein>
<organism>
    <name type="scientific">Campylobacter jejuni subsp. jejuni serotype O:2 (strain ATCC 700819 / NCTC 11168)</name>
    <dbReference type="NCBI Taxonomy" id="192222"/>
    <lineage>
        <taxon>Bacteria</taxon>
        <taxon>Pseudomonadati</taxon>
        <taxon>Campylobacterota</taxon>
        <taxon>Epsilonproteobacteria</taxon>
        <taxon>Campylobacterales</taxon>
        <taxon>Campylobacteraceae</taxon>
        <taxon>Campylobacter</taxon>
    </lineage>
</organism>
<gene>
    <name evidence="1" type="primary">dnaG</name>
    <name type="ordered locus">Cj1638</name>
</gene>
<evidence type="ECO:0000255" key="1">
    <source>
        <dbReference type="HAMAP-Rule" id="MF_00974"/>
    </source>
</evidence>
<reference key="1">
    <citation type="journal article" date="2000" name="Nature">
        <title>The genome sequence of the food-borne pathogen Campylobacter jejuni reveals hypervariable sequences.</title>
        <authorList>
            <person name="Parkhill J."/>
            <person name="Wren B.W."/>
            <person name="Mungall K.L."/>
            <person name="Ketley J.M."/>
            <person name="Churcher C.M."/>
            <person name="Basham D."/>
            <person name="Chillingworth T."/>
            <person name="Davies R.M."/>
            <person name="Feltwell T."/>
            <person name="Holroyd S."/>
            <person name="Jagels K."/>
            <person name="Karlyshev A.V."/>
            <person name="Moule S."/>
            <person name="Pallen M.J."/>
            <person name="Penn C.W."/>
            <person name="Quail M.A."/>
            <person name="Rajandream M.A."/>
            <person name="Rutherford K.M."/>
            <person name="van Vliet A.H.M."/>
            <person name="Whitehead S."/>
            <person name="Barrell B.G."/>
        </authorList>
    </citation>
    <scope>NUCLEOTIDE SEQUENCE [LARGE SCALE GENOMIC DNA]</scope>
    <source>
        <strain>ATCC 700819 / NCTC 11168</strain>
    </source>
</reference>
<proteinExistence type="inferred from homology"/>
<keyword id="KW-0235">DNA replication</keyword>
<keyword id="KW-0238">DNA-binding</keyword>
<keyword id="KW-0240">DNA-directed RNA polymerase</keyword>
<keyword id="KW-0460">Magnesium</keyword>
<keyword id="KW-0479">Metal-binding</keyword>
<keyword id="KW-0548">Nucleotidyltransferase</keyword>
<keyword id="KW-0639">Primosome</keyword>
<keyword id="KW-1185">Reference proteome</keyword>
<keyword id="KW-0804">Transcription</keyword>
<keyword id="KW-0808">Transferase</keyword>
<keyword id="KW-0862">Zinc</keyword>
<keyword id="KW-0863">Zinc-finger</keyword>
<feature type="chain" id="PRO_0000180484" description="DNA primase">
    <location>
        <begin position="1"/>
        <end position="605"/>
    </location>
</feature>
<feature type="domain" description="Toprim" evidence="1">
    <location>
        <begin position="248"/>
        <end position="329"/>
    </location>
</feature>
<feature type="zinc finger region" description="CHC2-type" evidence="1">
    <location>
        <begin position="37"/>
        <end position="61"/>
    </location>
</feature>
<feature type="binding site" evidence="1">
    <location>
        <position position="254"/>
    </location>
    <ligand>
        <name>Mg(2+)</name>
        <dbReference type="ChEBI" id="CHEBI:18420"/>
        <label>1</label>
        <note>catalytic</note>
    </ligand>
</feature>
<feature type="binding site" evidence="1">
    <location>
        <position position="298"/>
    </location>
    <ligand>
        <name>Mg(2+)</name>
        <dbReference type="ChEBI" id="CHEBI:18420"/>
        <label>1</label>
        <note>catalytic</note>
    </ligand>
</feature>
<feature type="binding site" evidence="1">
    <location>
        <position position="298"/>
    </location>
    <ligand>
        <name>Mg(2+)</name>
        <dbReference type="ChEBI" id="CHEBI:18420"/>
        <label>2</label>
    </ligand>
</feature>
<feature type="binding site" evidence="1">
    <location>
        <position position="300"/>
    </location>
    <ligand>
        <name>Mg(2+)</name>
        <dbReference type="ChEBI" id="CHEBI:18420"/>
        <label>2</label>
    </ligand>
</feature>
<comment type="function">
    <text evidence="1">RNA polymerase that catalyzes the synthesis of short RNA molecules used as primers for DNA polymerase during DNA replication.</text>
</comment>
<comment type="catalytic activity">
    <reaction evidence="1">
        <text>ssDNA + n NTP = ssDNA/pppN(pN)n-1 hybrid + (n-1) diphosphate.</text>
        <dbReference type="EC" id="2.7.7.101"/>
    </reaction>
</comment>
<comment type="cofactor">
    <cofactor evidence="1">
        <name>Zn(2+)</name>
        <dbReference type="ChEBI" id="CHEBI:29105"/>
    </cofactor>
    <text evidence="1">Binds 1 zinc ion per monomer.</text>
</comment>
<comment type="cofactor">
    <cofactor evidence="1">
        <name>Mg(2+)</name>
        <dbReference type="ChEBI" id="CHEBI:18420"/>
    </cofactor>
    <text evidence="1">Binds two Mg(2+) per subunit.</text>
</comment>
<comment type="subunit">
    <text evidence="1">Monomer. Interacts with DnaB.</text>
</comment>
<comment type="domain">
    <text evidence="1">Contains an N-terminal zinc-binding domain, a central core domain that contains the primase activity, and a C-terminal DnaB-binding domain.</text>
</comment>
<comment type="similarity">
    <text evidence="1">Belongs to the DnaG primase family.</text>
</comment>
<sequence>MITKESIENLSQRLNIVDIIENYIEVKKQGSSFVCICPFHADKNPSMHINPIKGFYHCFACKAGGDAFKFVMDYEKLSFADAVEKVASLSNFTLSYTKEKQENKKELKSILPSLNAYFKDNLKHHKEVLTYLYQRALNDKDIAKFELGFAGASEDSIRLLQNQKIPLEDAMSVGALKKDENNEFYASFIWRITFPIYDHKDLLVGFGGRTLNPNVPAKYVNSPQNILFDKSRIFYAFNIAKENIAKKKEIIVCEGYMDAIAFHKAGFNNAVAVLGTALTEHHLPLIRRYDAKVILCFDNDEAGLKAATRSAFLLSTNKIDGKVAILQGGKDPAELVAKNESTKLHNILDEGIELGEFYIRRLISTHSIISALDKQKALETIQKFTFNLEPLVANSYTSLVSNLLKVDEKFIVLSQNSKKTIQTPLISQNKYNFPKEKIHIAELELIAFLKQHPDICNDFKQISDSVCFKHKILLDKILEKKGYEDSDIREFESKNIRKNLNYSEFLLGICKVNLAFLNNVKIKNSTLALKKQLFTLIDKNLNLLIKNLNTAELNNFLKEYLSFLKYEKNEEILQQSFRNLNGIFGNKNFTAYDLGFSIQNNDEPF</sequence>
<dbReference type="EC" id="2.7.7.101" evidence="1"/>
<dbReference type="EMBL" id="AL111168">
    <property type="protein sequence ID" value="CAL35735.1"/>
    <property type="molecule type" value="Genomic_DNA"/>
</dbReference>
<dbReference type="PIR" id="D81260">
    <property type="entry name" value="D81260"/>
</dbReference>
<dbReference type="RefSeq" id="WP_002851181.1">
    <property type="nucleotide sequence ID" value="NZ_SZUC01000002.1"/>
</dbReference>
<dbReference type="RefSeq" id="YP_002345007.1">
    <property type="nucleotide sequence ID" value="NC_002163.1"/>
</dbReference>
<dbReference type="SMR" id="Q9PM37"/>
<dbReference type="IntAct" id="Q9PM37">
    <property type="interactions" value="4"/>
</dbReference>
<dbReference type="STRING" id="192222.Cj1638"/>
<dbReference type="PaxDb" id="192222-Cj1638"/>
<dbReference type="EnsemblBacteria" id="CAL35735">
    <property type="protein sequence ID" value="CAL35735"/>
    <property type="gene ID" value="Cj1638"/>
</dbReference>
<dbReference type="GeneID" id="905911"/>
<dbReference type="KEGG" id="cje:Cj1638"/>
<dbReference type="PATRIC" id="fig|192222.6.peg.1614"/>
<dbReference type="eggNOG" id="COG0358">
    <property type="taxonomic scope" value="Bacteria"/>
</dbReference>
<dbReference type="HOGENOM" id="CLU_013501_3_2_7"/>
<dbReference type="OrthoDB" id="9803773at2"/>
<dbReference type="Proteomes" id="UP000000799">
    <property type="component" value="Chromosome"/>
</dbReference>
<dbReference type="GO" id="GO:0005737">
    <property type="term" value="C:cytoplasm"/>
    <property type="evidence" value="ECO:0007669"/>
    <property type="project" value="TreeGrafter"/>
</dbReference>
<dbReference type="GO" id="GO:0000428">
    <property type="term" value="C:DNA-directed RNA polymerase complex"/>
    <property type="evidence" value="ECO:0007669"/>
    <property type="project" value="UniProtKB-KW"/>
</dbReference>
<dbReference type="GO" id="GO:1990077">
    <property type="term" value="C:primosome complex"/>
    <property type="evidence" value="ECO:0007669"/>
    <property type="project" value="UniProtKB-KW"/>
</dbReference>
<dbReference type="GO" id="GO:0003677">
    <property type="term" value="F:DNA binding"/>
    <property type="evidence" value="ECO:0007669"/>
    <property type="project" value="UniProtKB-KW"/>
</dbReference>
<dbReference type="GO" id="GO:0003899">
    <property type="term" value="F:DNA-directed RNA polymerase activity"/>
    <property type="evidence" value="ECO:0007669"/>
    <property type="project" value="InterPro"/>
</dbReference>
<dbReference type="GO" id="GO:0008270">
    <property type="term" value="F:zinc ion binding"/>
    <property type="evidence" value="ECO:0007669"/>
    <property type="project" value="UniProtKB-UniRule"/>
</dbReference>
<dbReference type="GO" id="GO:0006269">
    <property type="term" value="P:DNA replication, synthesis of primer"/>
    <property type="evidence" value="ECO:0007669"/>
    <property type="project" value="UniProtKB-UniRule"/>
</dbReference>
<dbReference type="CDD" id="cd03364">
    <property type="entry name" value="TOPRIM_DnaG_primases"/>
    <property type="match status" value="1"/>
</dbReference>
<dbReference type="FunFam" id="3.90.580.10:FF:000001">
    <property type="entry name" value="DNA primase"/>
    <property type="match status" value="1"/>
</dbReference>
<dbReference type="Gene3D" id="3.40.1360.10">
    <property type="match status" value="1"/>
</dbReference>
<dbReference type="Gene3D" id="3.90.980.10">
    <property type="entry name" value="DNA primase, catalytic core, N-terminal domain"/>
    <property type="match status" value="1"/>
</dbReference>
<dbReference type="Gene3D" id="3.90.580.10">
    <property type="entry name" value="Zinc finger, CHC2-type domain"/>
    <property type="match status" value="1"/>
</dbReference>
<dbReference type="HAMAP" id="MF_00974">
    <property type="entry name" value="DNA_primase_DnaG"/>
    <property type="match status" value="1"/>
</dbReference>
<dbReference type="InterPro" id="IPR037068">
    <property type="entry name" value="DNA_primase_core_N_sf"/>
</dbReference>
<dbReference type="InterPro" id="IPR006295">
    <property type="entry name" value="DNA_primase_DnaG"/>
</dbReference>
<dbReference type="InterPro" id="IPR036977">
    <property type="entry name" value="DNA_primase_Znf_CHC2"/>
</dbReference>
<dbReference type="InterPro" id="IPR030846">
    <property type="entry name" value="DnaG_bac"/>
</dbReference>
<dbReference type="InterPro" id="IPR013264">
    <property type="entry name" value="DNAG_N"/>
</dbReference>
<dbReference type="InterPro" id="IPR050219">
    <property type="entry name" value="DnaG_primase"/>
</dbReference>
<dbReference type="InterPro" id="IPR034151">
    <property type="entry name" value="TOPRIM_DnaG_bac"/>
</dbReference>
<dbReference type="InterPro" id="IPR006171">
    <property type="entry name" value="TOPRIM_dom"/>
</dbReference>
<dbReference type="InterPro" id="IPR002694">
    <property type="entry name" value="Znf_CHC2"/>
</dbReference>
<dbReference type="NCBIfam" id="TIGR01391">
    <property type="entry name" value="dnaG"/>
    <property type="match status" value="1"/>
</dbReference>
<dbReference type="PANTHER" id="PTHR30313">
    <property type="entry name" value="DNA PRIMASE"/>
    <property type="match status" value="1"/>
</dbReference>
<dbReference type="PANTHER" id="PTHR30313:SF2">
    <property type="entry name" value="DNA PRIMASE"/>
    <property type="match status" value="1"/>
</dbReference>
<dbReference type="Pfam" id="PF08275">
    <property type="entry name" value="DNAG_N"/>
    <property type="match status" value="1"/>
</dbReference>
<dbReference type="Pfam" id="PF13155">
    <property type="entry name" value="Toprim_2"/>
    <property type="match status" value="1"/>
</dbReference>
<dbReference type="Pfam" id="PF01807">
    <property type="entry name" value="Zn_ribbon_DnaG"/>
    <property type="match status" value="1"/>
</dbReference>
<dbReference type="PIRSF" id="PIRSF002811">
    <property type="entry name" value="DnaG"/>
    <property type="match status" value="1"/>
</dbReference>
<dbReference type="SMART" id="SM00493">
    <property type="entry name" value="TOPRIM"/>
    <property type="match status" value="1"/>
</dbReference>
<dbReference type="SMART" id="SM00400">
    <property type="entry name" value="ZnF_CHCC"/>
    <property type="match status" value="1"/>
</dbReference>
<dbReference type="SUPFAM" id="SSF56731">
    <property type="entry name" value="DNA primase core"/>
    <property type="match status" value="1"/>
</dbReference>
<dbReference type="SUPFAM" id="SSF57783">
    <property type="entry name" value="Zinc beta-ribbon"/>
    <property type="match status" value="1"/>
</dbReference>
<dbReference type="PROSITE" id="PS50880">
    <property type="entry name" value="TOPRIM"/>
    <property type="match status" value="1"/>
</dbReference>